<sequence>MDCYTANWNPLGDSAFYRKYELYSMDWDLKEELKDCLVAAAPYGGPIALLRNCWRKEKAASVRPVLEIYSASGLPLASLLWKSGPVVALGWSAEEELLCVQEDGAVLVYGLHGDFRRHFSMGNEVLQNRVLDARIFHTEFGSGVAILTGAYRFTLSANVGDLKLRRMPEVPGLQSAPSCWTTLCHDRVPHILLAVGPDLYLLDHATCSAVTPAGLAPGVSSFLQMAVSFTYRYLALFTDTGYIWMGTASLKEKLCEFNCNIRAPPKQMVWCSRPRSKERAVVVAWERRLMVVGNAPESIQFVLDEDSYLVPELDGVRIFSRSTHEFLHEVPVASEEIFKIASMAPGALLLEAQKEYEKESQKADEYLREIQELGQLIQAVQQCIEAAGHEHQPDMQKSLLRAASFGKCFLDRFPPDSFVHMCQDLRVLNAIRDYHIGIPLTYTQYKQLTIQVLLDRLVLRRLYPLAIQICEYLRLPEVQGVSRILAHWACYKARAWDMRDEDVARAINQKLGDTPGVSYSDIAARAYGCGRTELAIKLLEYEPRSGEQVPLLLKMKRSKLALSKAIESGDTDLVFTVLLHLKNELNRGDFFMTLRNQPMALSLYRQFCKHQELDTLKDLYNQDDNHQELGSFHIRASYAAEERIEGRVAALQTAADAFYKAKNEFAAKATEDQMRLLRIQRRLEDELGGRFLDLSLHDTVTTLILGGHNKRAEQLARDFRIPDKRLWWLKLAALADLEDWEELEKFSKSKKSPIGYLPFVEICMKQHNKHEAKKYASRVGPEQKVKALLLVGDVAQAAEVAIEHRNETELSLVLSHCTGATDGAIADKIQRARAQAQKK</sequence>
<evidence type="ECO:0000250" key="1">
    <source>
        <dbReference type="UniProtKB" id="Q9H269"/>
    </source>
</evidence>
<evidence type="ECO:0000269" key="2">
    <source>
    </source>
</evidence>
<evidence type="ECO:0000269" key="3">
    <source>
    </source>
</evidence>
<evidence type="ECO:0000269" key="4">
    <source>
    </source>
</evidence>
<evidence type="ECO:0000303" key="5">
    <source>
    </source>
</evidence>
<evidence type="ECO:0000305" key="6"/>
<evidence type="ECO:0000305" key="7">
    <source>
    </source>
</evidence>
<evidence type="ECO:0007744" key="8">
    <source>
    </source>
</evidence>
<keyword id="KW-0025">Alternative splicing</keyword>
<keyword id="KW-0072">Autophagy</keyword>
<keyword id="KW-0968">Cytoplasmic vesicle</keyword>
<keyword id="KW-0967">Endosome</keyword>
<keyword id="KW-0458">Lysosome</keyword>
<keyword id="KW-0472">Membrane</keyword>
<keyword id="KW-0944">Nitration</keyword>
<keyword id="KW-0653">Protein transport</keyword>
<keyword id="KW-1185">Reference proteome</keyword>
<keyword id="KW-0813">Transport</keyword>
<reference key="1">
    <citation type="submission" date="2001-03" db="EMBL/GenBank/DDBJ databases">
        <title>Cloning of mouse Vps16.</title>
        <authorList>
            <person name="Akazawa C."/>
            <person name="Kim B.Y."/>
            <person name="Helmut K."/>
        </authorList>
    </citation>
    <scope>NUCLEOTIDE SEQUENCE [MRNA] (ISOFORM 1)</scope>
    <source>
        <tissue>Brain</tissue>
    </source>
</reference>
<reference key="2">
    <citation type="journal article" date="2009" name="PLoS Biol.">
        <title>Lineage-specific biology revealed by a finished genome assembly of the mouse.</title>
        <authorList>
            <person name="Church D.M."/>
            <person name="Goodstadt L."/>
            <person name="Hillier L.W."/>
            <person name="Zody M.C."/>
            <person name="Goldstein S."/>
            <person name="She X."/>
            <person name="Bult C.J."/>
            <person name="Agarwala R."/>
            <person name="Cherry J.L."/>
            <person name="DiCuccio M."/>
            <person name="Hlavina W."/>
            <person name="Kapustin Y."/>
            <person name="Meric P."/>
            <person name="Maglott D."/>
            <person name="Birtle Z."/>
            <person name="Marques A.C."/>
            <person name="Graves T."/>
            <person name="Zhou S."/>
            <person name="Teague B."/>
            <person name="Potamousis K."/>
            <person name="Churas C."/>
            <person name="Place M."/>
            <person name="Herschleb J."/>
            <person name="Runnheim R."/>
            <person name="Forrest D."/>
            <person name="Amos-Landgraf J."/>
            <person name="Schwartz D.C."/>
            <person name="Cheng Z."/>
            <person name="Lindblad-Toh K."/>
            <person name="Eichler E.E."/>
            <person name="Ponting C.P."/>
        </authorList>
    </citation>
    <scope>NUCLEOTIDE SEQUENCE [LARGE SCALE GENOMIC DNA]</scope>
    <source>
        <strain>C57BL/6J</strain>
    </source>
</reference>
<reference key="3">
    <citation type="journal article" date="2004" name="Genome Res.">
        <title>The status, quality, and expansion of the NIH full-length cDNA project: the Mammalian Gene Collection (MGC).</title>
        <authorList>
            <consortium name="The MGC Project Team"/>
        </authorList>
    </citation>
    <scope>NUCLEOTIDE SEQUENCE [LARGE SCALE MRNA] (ISOFORMS 1 AND 2)</scope>
    <source>
        <tissue>Mammary tumor</tissue>
    </source>
</reference>
<reference key="4">
    <citation type="journal article" date="2006" name="Biochemistry">
        <title>Endogenously nitrated proteins in mouse brain: links to neurodegenerative disease.</title>
        <authorList>
            <person name="Sacksteder C.A."/>
            <person name="Qian W.-J."/>
            <person name="Knyushko T.V."/>
            <person name="Wang H."/>
            <person name="Chin M.H."/>
            <person name="Lacan G."/>
            <person name="Melega W.P."/>
            <person name="Camp D.G. II"/>
            <person name="Smith R.D."/>
            <person name="Smith D.J."/>
            <person name="Squier T.C."/>
            <person name="Bigelow D.J."/>
        </authorList>
    </citation>
    <scope>NITRATION [LARGE SCALE ANALYSIS] AT TYR-4</scope>
    <scope>IDENTIFICATION BY MASS SPECTROMETRY [LARGE SCALE ANALYSIS]</scope>
    <source>
        <tissue>Brain</tissue>
    </source>
</reference>
<reference key="5">
    <citation type="journal article" date="2010" name="Cell">
        <title>A tissue-specific atlas of mouse protein phosphorylation and expression.</title>
        <authorList>
            <person name="Huttlin E.L."/>
            <person name="Jedrychowski M.P."/>
            <person name="Elias J.E."/>
            <person name="Goswami T."/>
            <person name="Rad R."/>
            <person name="Beausoleil S.A."/>
            <person name="Villen J."/>
            <person name="Haas W."/>
            <person name="Sowa M.E."/>
            <person name="Gygi S.P."/>
        </authorList>
    </citation>
    <scope>IDENTIFICATION BY MASS SPECTROMETRY [LARGE SCALE ANALYSIS]</scope>
    <source>
        <tissue>Brain</tissue>
        <tissue>Kidney</tissue>
        <tissue>Liver</tissue>
        <tissue>Lung</tissue>
        <tissue>Pancreas</tissue>
        <tissue>Spleen</tissue>
        <tissue>Testis</tissue>
    </source>
</reference>
<reference key="6">
    <citation type="journal article" date="2011" name="Mol. Biol. Cell">
        <title>Clathrin-dependent mechanisms modulate the subcellular distribution of class C Vps/HOPS tether subunits in polarized and nonpolarized cells.</title>
        <authorList>
            <person name="Zlatic S.A."/>
            <person name="Tornieri K."/>
            <person name="L'Hernault S.W."/>
            <person name="Faundez V."/>
        </authorList>
    </citation>
    <scope>INTERACTION WITH AP-3 COMPLEX AND CLATHRIN</scope>
    <scope>SUBCELLULAR LOCATION</scope>
</reference>
<reference key="7">
    <citation type="journal article" date="2014" name="Traffic">
        <title>Mammalian CORVET is required for fusion and conversion of distinct early endosome subpopulations.</title>
        <authorList>
            <person name="Perini E.D."/>
            <person name="Schaefer R."/>
            <person name="Stoeter M."/>
            <person name="Kalaidzidis Y."/>
            <person name="Zerial M."/>
        </authorList>
    </citation>
    <scope>INTERACTION WITH RAB5C</scope>
    <scope>SUBUNIT</scope>
</reference>
<reference key="8">
    <citation type="journal article" date="2016" name="Sci. Rep.">
        <title>Homozygous mutation of VPS16 gene is responsible for an autosomal recessive adolescent-onset primary dystonia.</title>
        <authorList>
            <person name="Cai X."/>
            <person name="Chen X."/>
            <person name="Wu S."/>
            <person name="Liu W."/>
            <person name="Zhang X."/>
            <person name="Zhang D."/>
            <person name="He S."/>
            <person name="Wang B."/>
            <person name="Zhang M."/>
            <person name="Zhang Y."/>
            <person name="Li Z."/>
            <person name="Luo K."/>
            <person name="Cai Z."/>
            <person name="Li W."/>
        </authorList>
    </citation>
    <scope>MUTAGENESIS OF ASN-52</scope>
</reference>
<organism>
    <name type="scientific">Mus musculus</name>
    <name type="common">Mouse</name>
    <dbReference type="NCBI Taxonomy" id="10090"/>
    <lineage>
        <taxon>Eukaryota</taxon>
        <taxon>Metazoa</taxon>
        <taxon>Chordata</taxon>
        <taxon>Craniata</taxon>
        <taxon>Vertebrata</taxon>
        <taxon>Euteleostomi</taxon>
        <taxon>Mammalia</taxon>
        <taxon>Eutheria</taxon>
        <taxon>Euarchontoglires</taxon>
        <taxon>Glires</taxon>
        <taxon>Rodentia</taxon>
        <taxon>Myomorpha</taxon>
        <taxon>Muroidea</taxon>
        <taxon>Muridae</taxon>
        <taxon>Murinae</taxon>
        <taxon>Mus</taxon>
        <taxon>Mus</taxon>
    </lineage>
</organism>
<feature type="chain" id="PRO_0000065889" description="Vacuolar protein sorting-associated protein 16 homolog">
    <location>
        <begin position="1"/>
        <end position="839"/>
    </location>
</feature>
<feature type="region of interest" description="Interaction with VPS33A" evidence="1">
    <location>
        <begin position="642"/>
        <end position="736"/>
    </location>
</feature>
<feature type="modified residue" description="3'-nitrotyrosine" evidence="8">
    <location>
        <position position="4"/>
    </location>
</feature>
<feature type="splice variant" id="VSP_004019" description="In isoform 2." evidence="5">
    <location>
        <begin position="1"/>
        <end position="420"/>
    </location>
</feature>
<feature type="mutagenesis site" description="Down-regulation of VPS16 expression in mice; mice exhibited obvious abnormality in the behavior and significantly impaired motor function." evidence="4">
    <original>N</original>
    <variation>K</variation>
    <location>
        <position position="52"/>
    </location>
</feature>
<feature type="sequence conflict" description="In Ref. 1; BAB64892." evidence="6" ref="1">
    <original>L</original>
    <variation>Q</variation>
    <location>
        <position position="155"/>
    </location>
</feature>
<feature type="sequence conflict" description="In Ref. 1; BAB64892 and 3; AAH25626." evidence="6" ref="1 3">
    <original>L</original>
    <variation>M</variation>
    <location>
        <position position="173"/>
    </location>
</feature>
<feature type="sequence conflict" description="In Ref. 1; BAB64892." evidence="6" ref="1">
    <original>I</original>
    <variation>V</variation>
    <location>
        <position position="431"/>
    </location>
</feature>
<feature type="sequence conflict" description="In Ref. 1; BAB64892 and 3; AAH03944/AAH25626." evidence="6" ref="1 3">
    <original>ARAWDMR</original>
    <variation>VQQKDVS</variation>
    <location>
        <begin position="493"/>
        <end position="499"/>
    </location>
</feature>
<feature type="sequence conflict" description="In Ref. 3; AAH25626." evidence="6" ref="3">
    <original>T</original>
    <variation>M</variation>
    <location>
        <position position="653"/>
    </location>
</feature>
<proteinExistence type="evidence at protein level"/>
<gene>
    <name type="primary">Vps16</name>
</gene>
<dbReference type="EMBL" id="AB056721">
    <property type="protein sequence ID" value="BAB64892.1"/>
    <property type="molecule type" value="mRNA"/>
</dbReference>
<dbReference type="EMBL" id="BX890605">
    <property type="status" value="NOT_ANNOTATED_CDS"/>
    <property type="molecule type" value="Genomic_DNA"/>
</dbReference>
<dbReference type="EMBL" id="BC003944">
    <property type="protein sequence ID" value="AAH03944.1"/>
    <property type="molecule type" value="mRNA"/>
</dbReference>
<dbReference type="EMBL" id="BC025626">
    <property type="protein sequence ID" value="AAH25626.1"/>
    <property type="molecule type" value="mRNA"/>
</dbReference>
<dbReference type="CCDS" id="CCDS38242.1">
    <molecule id="Q920Q4-1"/>
</dbReference>
<dbReference type="SMR" id="Q920Q4"/>
<dbReference type="FunCoup" id="Q920Q4">
    <property type="interactions" value="3580"/>
</dbReference>
<dbReference type="IntAct" id="Q920Q4">
    <property type="interactions" value="5"/>
</dbReference>
<dbReference type="MINT" id="Q920Q4"/>
<dbReference type="STRING" id="10090.ENSMUSP00000028900"/>
<dbReference type="GlyGen" id="Q920Q4">
    <property type="glycosylation" value="1 site"/>
</dbReference>
<dbReference type="iPTMnet" id="Q920Q4"/>
<dbReference type="PhosphoSitePlus" id="Q920Q4"/>
<dbReference type="SwissPalm" id="Q920Q4"/>
<dbReference type="PaxDb" id="10090-ENSMUSP00000028900"/>
<dbReference type="PeptideAtlas" id="Q920Q4"/>
<dbReference type="ProteomicsDB" id="297813">
    <molecule id="Q920Q4-1"/>
</dbReference>
<dbReference type="ProteomicsDB" id="297814">
    <molecule id="Q920Q4-2"/>
</dbReference>
<dbReference type="Pumba" id="Q920Q4"/>
<dbReference type="AGR" id="MGI:2136772"/>
<dbReference type="MGI" id="MGI:2136772">
    <property type="gene designation" value="Vps16"/>
</dbReference>
<dbReference type="eggNOG" id="KOG2280">
    <property type="taxonomic scope" value="Eukaryota"/>
</dbReference>
<dbReference type="InParanoid" id="Q920Q4"/>
<dbReference type="OrthoDB" id="1792at2759"/>
<dbReference type="PhylomeDB" id="Q920Q4"/>
<dbReference type="CD-CODE" id="CE726F99">
    <property type="entry name" value="Postsynaptic density"/>
</dbReference>
<dbReference type="ChiTaRS" id="Vps16">
    <property type="organism name" value="mouse"/>
</dbReference>
<dbReference type="PRO" id="PR:Q920Q4"/>
<dbReference type="Proteomes" id="UP000000589">
    <property type="component" value="Unplaced"/>
</dbReference>
<dbReference type="RNAct" id="Q920Q4">
    <property type="molecule type" value="protein"/>
</dbReference>
<dbReference type="GO" id="GO:0005884">
    <property type="term" value="C:actin filament"/>
    <property type="evidence" value="ECO:0000314"/>
    <property type="project" value="MGI"/>
</dbReference>
<dbReference type="GO" id="GO:0005776">
    <property type="term" value="C:autophagosome"/>
    <property type="evidence" value="ECO:0007669"/>
    <property type="project" value="UniProtKB-SubCell"/>
</dbReference>
<dbReference type="GO" id="GO:0030136">
    <property type="term" value="C:clathrin-coated vesicle"/>
    <property type="evidence" value="ECO:0000314"/>
    <property type="project" value="UniProtKB"/>
</dbReference>
<dbReference type="GO" id="GO:0033263">
    <property type="term" value="C:CORVET complex"/>
    <property type="evidence" value="ECO:0000314"/>
    <property type="project" value="UniProtKB"/>
</dbReference>
<dbReference type="GO" id="GO:0005769">
    <property type="term" value="C:early endosome"/>
    <property type="evidence" value="ECO:0000314"/>
    <property type="project" value="MGI"/>
</dbReference>
<dbReference type="GO" id="GO:0031901">
    <property type="term" value="C:early endosome membrane"/>
    <property type="evidence" value="ECO:0000314"/>
    <property type="project" value="UniProtKB"/>
</dbReference>
<dbReference type="GO" id="GO:0031902">
    <property type="term" value="C:late endosome membrane"/>
    <property type="evidence" value="ECO:0007669"/>
    <property type="project" value="UniProtKB-SubCell"/>
</dbReference>
<dbReference type="GO" id="GO:0005765">
    <property type="term" value="C:lysosomal membrane"/>
    <property type="evidence" value="ECO:0007669"/>
    <property type="project" value="UniProtKB-SubCell"/>
</dbReference>
<dbReference type="GO" id="GO:0003779">
    <property type="term" value="F:actin binding"/>
    <property type="evidence" value="ECO:0000314"/>
    <property type="project" value="MGI"/>
</dbReference>
<dbReference type="GO" id="GO:0006914">
    <property type="term" value="P:autophagy"/>
    <property type="evidence" value="ECO:0007669"/>
    <property type="project" value="UniProtKB-KW"/>
</dbReference>
<dbReference type="GO" id="GO:0006886">
    <property type="term" value="P:intracellular protein transport"/>
    <property type="evidence" value="ECO:0007669"/>
    <property type="project" value="InterPro"/>
</dbReference>
<dbReference type="GO" id="GO:0046718">
    <property type="term" value="P:symbiont entry into host cell"/>
    <property type="evidence" value="ECO:0000315"/>
    <property type="project" value="MGI"/>
</dbReference>
<dbReference type="GO" id="GO:0007033">
    <property type="term" value="P:vacuole organization"/>
    <property type="evidence" value="ECO:0007669"/>
    <property type="project" value="InterPro"/>
</dbReference>
<dbReference type="FunFam" id="1.10.150.780:FF:000001">
    <property type="entry name" value="Vacuolar protein sorting-associated protein 16 homolog"/>
    <property type="match status" value="1"/>
</dbReference>
<dbReference type="Gene3D" id="1.10.150.780">
    <property type="entry name" value="Vps16, C-terminal region"/>
    <property type="match status" value="1"/>
</dbReference>
<dbReference type="InterPro" id="IPR016534">
    <property type="entry name" value="VPS16"/>
</dbReference>
<dbReference type="InterPro" id="IPR006925">
    <property type="entry name" value="Vps16_C"/>
</dbReference>
<dbReference type="InterPro" id="IPR038132">
    <property type="entry name" value="Vps16_C_sf"/>
</dbReference>
<dbReference type="InterPro" id="IPR006926">
    <property type="entry name" value="Vps16_N"/>
</dbReference>
<dbReference type="PANTHER" id="PTHR12811">
    <property type="entry name" value="VACUOLAR PROTEIN SORTING VPS16"/>
    <property type="match status" value="1"/>
</dbReference>
<dbReference type="PANTHER" id="PTHR12811:SF0">
    <property type="entry name" value="VACUOLAR PROTEIN SORTING-ASSOCIATED PROTEIN 16 HOMOLOG"/>
    <property type="match status" value="1"/>
</dbReference>
<dbReference type="Pfam" id="PF04840">
    <property type="entry name" value="Vps16_C"/>
    <property type="match status" value="1"/>
</dbReference>
<dbReference type="Pfam" id="PF04841">
    <property type="entry name" value="Vps16_N"/>
    <property type="match status" value="1"/>
</dbReference>
<dbReference type="PIRSF" id="PIRSF007949">
    <property type="entry name" value="VPS16"/>
    <property type="match status" value="1"/>
</dbReference>
<name>VPS16_MOUSE</name>
<accession>Q920Q4</accession>
<accession>A2BI91</accession>
<accession>Q8R3C3</accession>
<accession>Q99KZ4</accession>
<comment type="function">
    <text evidence="1">Plays a role in vesicle-mediated protein trafficking to lysosomal compartments including the endocytic membrane transport and autophagic pathways. Believed to act as a core component of the putative HOPS and CORVET endosomal tethering complexes which are proposed to be involved in the Rab5-to-Rab7 endosome conversion probably implicating MON1A/B, and via binding SNAREs and SNARE complexes to mediate tethering and docking events during SNARE-mediated membrane fusion. The HOPS complex is proposed to be recruited to Rab7 on the late endosomal membrane and to regulate late endocytic, phagocytic and autophagic traffic towards lysosomes. The CORVET complex is proposed to function as a Rab5 effector to mediate early endosome fusion probably in specific endosome subpopulations. Required for recruitment of VPS33A to the HOPS complex. Required for fusion of endosomes and autophagosomes with lysosomes; the function is dependent on its association with VPS33A but not VPS33B. The function in autophagosome-lysosome fusion implicates STX17 but not UVRAG.</text>
</comment>
<comment type="subunit">
    <text evidence="1 2 3 7">Core component of at least two putative endosomal tethering complexes, the homotypic fusion and vacuole protein sorting (HOPS) complex and the class C core vacuole/endosome tethering (CORVET) complex. Their common core is composed of the class C Vps proteins VPS11, VPS16, VPS18 and VPS33A, which in HOPS further associates with VPS39 and VPS41 and in CORVET with VPS8 and TGFBRAP1 (PubMed:25266290). Interacts with RAB5C (PubMed:25266290). Interacts with STX17, MON1B (By similarity). Associates with adapter protein complex 3 (AP-3) and clathrin:AP-3 complexes (PubMed:21411634).</text>
</comment>
<comment type="interaction">
    <interactant intactId="EBI-775797">
        <id>Q920Q4</id>
    </interactant>
    <interactant intactId="EBI-749080">
        <id>Q9H9C1</id>
        <label>VIPAS39</label>
    </interactant>
    <organismsDiffer>true</organismsDiffer>
    <experiments>4</experiments>
</comment>
<comment type="subcellular location">
    <subcellularLocation>
        <location evidence="1">Late endosome membrane</location>
        <topology evidence="1">Peripheral membrane protein</topology>
        <orientation evidence="1">Cytoplasmic side</orientation>
    </subcellularLocation>
    <subcellularLocation>
        <location evidence="1">Lysosome membrane</location>
        <topology evidence="1">Peripheral membrane protein</topology>
        <orientation evidence="1">Cytoplasmic side</orientation>
    </subcellularLocation>
    <subcellularLocation>
        <location evidence="1 2">Early endosome</location>
    </subcellularLocation>
    <subcellularLocation>
        <location evidence="2">Cytoplasmic vesicle</location>
        <location evidence="2">Clathrin-coated vesicle</location>
    </subcellularLocation>
    <subcellularLocation>
        <location evidence="1">Cytoplasmic vesicle</location>
        <location evidence="1">Autophagosome</location>
    </subcellularLocation>
    <text evidence="1 2">Colocalizes with AP-3, clathrin, Rab5 and Rab7b (PubMed:21411634). Cytoplasmic, peripheral membrane protein associated with early endosomes and late endosomes/lysosomes.</text>
</comment>
<comment type="alternative products">
    <event type="alternative splicing"/>
    <isoform>
        <id>Q920Q4-1</id>
        <name>1</name>
        <sequence type="displayed"/>
    </isoform>
    <isoform>
        <id>Q920Q4-2</id>
        <name>2</name>
        <sequence type="described" ref="VSP_004019"/>
    </isoform>
</comment>
<comment type="similarity">
    <text evidence="6">Belongs to the VPS16 family.</text>
</comment>
<protein>
    <recommendedName>
        <fullName>Vacuolar protein sorting-associated protein 16 homolog</fullName>
        <shortName>mVPS16</shortName>
    </recommendedName>
</protein>